<accession>A1SR17</accession>
<feature type="chain" id="PRO_1000057778" description="Deoxyuridine 5'-triphosphate nucleotidohydrolase">
    <location>
        <begin position="1"/>
        <end position="151"/>
    </location>
</feature>
<feature type="binding site" evidence="1">
    <location>
        <begin position="70"/>
        <end position="72"/>
    </location>
    <ligand>
        <name>substrate</name>
    </ligand>
</feature>
<feature type="binding site" evidence="1">
    <location>
        <position position="83"/>
    </location>
    <ligand>
        <name>substrate</name>
    </ligand>
</feature>
<feature type="binding site" evidence="1">
    <location>
        <begin position="87"/>
        <end position="89"/>
    </location>
    <ligand>
        <name>substrate</name>
    </ligand>
</feature>
<feature type="binding site" evidence="1">
    <location>
        <position position="97"/>
    </location>
    <ligand>
        <name>substrate</name>
    </ligand>
</feature>
<sequence length="151" mass="16275">MKQIELKILDPRIGKEFPLPEHATAGSAGMDLRACIDQALIIKPGETQLIPTGIAIHISDPGLAATILPRSGLGHKHGIVLGNLVGLIDSDYQGPLMVSCWNRSTESFRLEPGERLAQLVFLPVVQATFEIVDEFKSSERGEGGFGHSGKH</sequence>
<keyword id="KW-0378">Hydrolase</keyword>
<keyword id="KW-0460">Magnesium</keyword>
<keyword id="KW-0479">Metal-binding</keyword>
<keyword id="KW-0546">Nucleotide metabolism</keyword>
<keyword id="KW-1185">Reference proteome</keyword>
<dbReference type="EC" id="3.6.1.23" evidence="1"/>
<dbReference type="EMBL" id="CP000510">
    <property type="protein sequence ID" value="ABM01932.1"/>
    <property type="molecule type" value="Genomic_DNA"/>
</dbReference>
<dbReference type="RefSeq" id="WP_011768491.1">
    <property type="nucleotide sequence ID" value="NC_008709.1"/>
</dbReference>
<dbReference type="SMR" id="A1SR17"/>
<dbReference type="STRING" id="357804.Ping_0058"/>
<dbReference type="KEGG" id="pin:Ping_0058"/>
<dbReference type="eggNOG" id="COG0756">
    <property type="taxonomic scope" value="Bacteria"/>
</dbReference>
<dbReference type="HOGENOM" id="CLU_068508_1_1_6"/>
<dbReference type="UniPathway" id="UPA00610">
    <property type="reaction ID" value="UER00666"/>
</dbReference>
<dbReference type="Proteomes" id="UP000000639">
    <property type="component" value="Chromosome"/>
</dbReference>
<dbReference type="GO" id="GO:0004170">
    <property type="term" value="F:dUTP diphosphatase activity"/>
    <property type="evidence" value="ECO:0007669"/>
    <property type="project" value="UniProtKB-UniRule"/>
</dbReference>
<dbReference type="GO" id="GO:0000287">
    <property type="term" value="F:magnesium ion binding"/>
    <property type="evidence" value="ECO:0007669"/>
    <property type="project" value="UniProtKB-UniRule"/>
</dbReference>
<dbReference type="GO" id="GO:0006226">
    <property type="term" value="P:dUMP biosynthetic process"/>
    <property type="evidence" value="ECO:0007669"/>
    <property type="project" value="UniProtKB-UniRule"/>
</dbReference>
<dbReference type="GO" id="GO:0046081">
    <property type="term" value="P:dUTP catabolic process"/>
    <property type="evidence" value="ECO:0007669"/>
    <property type="project" value="InterPro"/>
</dbReference>
<dbReference type="CDD" id="cd07557">
    <property type="entry name" value="trimeric_dUTPase"/>
    <property type="match status" value="1"/>
</dbReference>
<dbReference type="FunFam" id="2.70.40.10:FF:000002">
    <property type="entry name" value="dUTP diphosphatase"/>
    <property type="match status" value="1"/>
</dbReference>
<dbReference type="Gene3D" id="2.70.40.10">
    <property type="match status" value="1"/>
</dbReference>
<dbReference type="HAMAP" id="MF_00116">
    <property type="entry name" value="dUTPase_bact"/>
    <property type="match status" value="1"/>
</dbReference>
<dbReference type="InterPro" id="IPR008181">
    <property type="entry name" value="dUTPase"/>
</dbReference>
<dbReference type="InterPro" id="IPR029054">
    <property type="entry name" value="dUTPase-like"/>
</dbReference>
<dbReference type="InterPro" id="IPR036157">
    <property type="entry name" value="dUTPase-like_sf"/>
</dbReference>
<dbReference type="InterPro" id="IPR033704">
    <property type="entry name" value="dUTPase_trimeric"/>
</dbReference>
<dbReference type="NCBIfam" id="TIGR00576">
    <property type="entry name" value="dut"/>
    <property type="match status" value="1"/>
</dbReference>
<dbReference type="NCBIfam" id="NF001862">
    <property type="entry name" value="PRK00601.1"/>
    <property type="match status" value="1"/>
</dbReference>
<dbReference type="PANTHER" id="PTHR11241">
    <property type="entry name" value="DEOXYURIDINE 5'-TRIPHOSPHATE NUCLEOTIDOHYDROLASE"/>
    <property type="match status" value="1"/>
</dbReference>
<dbReference type="PANTHER" id="PTHR11241:SF0">
    <property type="entry name" value="DEOXYURIDINE 5'-TRIPHOSPHATE NUCLEOTIDOHYDROLASE"/>
    <property type="match status" value="1"/>
</dbReference>
<dbReference type="Pfam" id="PF00692">
    <property type="entry name" value="dUTPase"/>
    <property type="match status" value="1"/>
</dbReference>
<dbReference type="SUPFAM" id="SSF51283">
    <property type="entry name" value="dUTPase-like"/>
    <property type="match status" value="1"/>
</dbReference>
<name>DUT_PSYIN</name>
<gene>
    <name evidence="1" type="primary">dut</name>
    <name type="ordered locus">Ping_0058</name>
</gene>
<evidence type="ECO:0000255" key="1">
    <source>
        <dbReference type="HAMAP-Rule" id="MF_00116"/>
    </source>
</evidence>
<reference key="1">
    <citation type="journal article" date="2008" name="BMC Genomics">
        <title>Genomics of an extreme psychrophile, Psychromonas ingrahamii.</title>
        <authorList>
            <person name="Riley M."/>
            <person name="Staley J.T."/>
            <person name="Danchin A."/>
            <person name="Wang T.Z."/>
            <person name="Brettin T.S."/>
            <person name="Hauser L.J."/>
            <person name="Land M.L."/>
            <person name="Thompson L.S."/>
        </authorList>
    </citation>
    <scope>NUCLEOTIDE SEQUENCE [LARGE SCALE GENOMIC DNA]</scope>
    <source>
        <strain>DSM 17664 / CCUG 51855 / 37</strain>
    </source>
</reference>
<comment type="function">
    <text evidence="1">This enzyme is involved in nucleotide metabolism: it produces dUMP, the immediate precursor of thymidine nucleotides and it decreases the intracellular concentration of dUTP so that uracil cannot be incorporated into DNA.</text>
</comment>
<comment type="catalytic activity">
    <reaction evidence="1">
        <text>dUTP + H2O = dUMP + diphosphate + H(+)</text>
        <dbReference type="Rhea" id="RHEA:10248"/>
        <dbReference type="ChEBI" id="CHEBI:15377"/>
        <dbReference type="ChEBI" id="CHEBI:15378"/>
        <dbReference type="ChEBI" id="CHEBI:33019"/>
        <dbReference type="ChEBI" id="CHEBI:61555"/>
        <dbReference type="ChEBI" id="CHEBI:246422"/>
        <dbReference type="EC" id="3.6.1.23"/>
    </reaction>
</comment>
<comment type="cofactor">
    <cofactor evidence="1">
        <name>Mg(2+)</name>
        <dbReference type="ChEBI" id="CHEBI:18420"/>
    </cofactor>
</comment>
<comment type="pathway">
    <text evidence="1">Pyrimidine metabolism; dUMP biosynthesis; dUMP from dCTP (dUTP route): step 2/2.</text>
</comment>
<comment type="similarity">
    <text evidence="1">Belongs to the dUTPase family.</text>
</comment>
<organism>
    <name type="scientific">Psychromonas ingrahamii (strain DSM 17664 / CCUG 51855 / 37)</name>
    <dbReference type="NCBI Taxonomy" id="357804"/>
    <lineage>
        <taxon>Bacteria</taxon>
        <taxon>Pseudomonadati</taxon>
        <taxon>Pseudomonadota</taxon>
        <taxon>Gammaproteobacteria</taxon>
        <taxon>Alteromonadales</taxon>
        <taxon>Psychromonadaceae</taxon>
        <taxon>Psychromonas</taxon>
    </lineage>
</organism>
<proteinExistence type="inferred from homology"/>
<protein>
    <recommendedName>
        <fullName evidence="1">Deoxyuridine 5'-triphosphate nucleotidohydrolase</fullName>
        <shortName evidence="1">dUTPase</shortName>
        <ecNumber evidence="1">3.6.1.23</ecNumber>
    </recommendedName>
    <alternativeName>
        <fullName evidence="1">dUTP pyrophosphatase</fullName>
    </alternativeName>
</protein>